<evidence type="ECO:0000250" key="1"/>
<evidence type="ECO:0000250" key="2">
    <source>
        <dbReference type="UniProtKB" id="P00157"/>
    </source>
</evidence>
<evidence type="ECO:0000255" key="3">
    <source>
        <dbReference type="PROSITE-ProRule" id="PRU00967"/>
    </source>
</evidence>
<evidence type="ECO:0000255" key="4">
    <source>
        <dbReference type="PROSITE-ProRule" id="PRU00968"/>
    </source>
</evidence>
<proteinExistence type="inferred from homology"/>
<gene>
    <name type="primary">MT-CYB</name>
    <name type="synonym">COB</name>
    <name type="synonym">CYTB</name>
    <name type="synonym">MTCYB</name>
</gene>
<keyword id="KW-0249">Electron transport</keyword>
<keyword id="KW-0349">Heme</keyword>
<keyword id="KW-0408">Iron</keyword>
<keyword id="KW-0472">Membrane</keyword>
<keyword id="KW-0479">Metal-binding</keyword>
<keyword id="KW-0496">Mitochondrion</keyword>
<keyword id="KW-0999">Mitochondrion inner membrane</keyword>
<keyword id="KW-0679">Respiratory chain</keyword>
<keyword id="KW-0812">Transmembrane</keyword>
<keyword id="KW-1133">Transmembrane helix</keyword>
<keyword id="KW-0813">Transport</keyword>
<keyword id="KW-0830">Ubiquinone</keyword>
<name>CYB_SORTU</name>
<sequence>MTNLRKTHPLMKIVNSSFIDLPAPSNISLWWNFGSLLGVCLIIQILTGLFLAMHYTSDTMTAFSSVTHICRDVNYGWLIRYLHANGASMFFICLFLHVGRGLYYGSYMYLETWNIGVLLLFAVMATAFMGYVLPWGQMSFWGATVITNLLSAIPYIGSDLVEWIWGGFSVDKATLTRFFAFHFILPFIIAALAGVHLLFLHEAGSNNPSGLSSDADKIPFHPYYTIKDILGVLLLILALTSLVLFSPDLLGDPDNYTLANPLNTPPHIKPEWYFLFAYAILRSIPNKLGGVLALVLSILILAVVPFLHTSKQRSMMFRPFSQCLFWILVADLLTLTWIGGQPVEHPFIIIGQLASILYFLLILVIMPITSLFENHLLKW</sequence>
<protein>
    <recommendedName>
        <fullName>Cytochrome b</fullName>
    </recommendedName>
    <alternativeName>
        <fullName>Complex III subunit 3</fullName>
    </alternativeName>
    <alternativeName>
        <fullName>Complex III subunit III</fullName>
    </alternativeName>
    <alternativeName>
        <fullName>Cytochrome b-c1 complex subunit 3</fullName>
    </alternativeName>
    <alternativeName>
        <fullName>Ubiquinol-cytochrome-c reductase complex cytochrome b subunit</fullName>
    </alternativeName>
</protein>
<dbReference type="EMBL" id="D85371">
    <property type="protein sequence ID" value="BAA21364.1"/>
    <property type="molecule type" value="Genomic_DNA"/>
</dbReference>
<dbReference type="EMBL" id="AJ000424">
    <property type="protein sequence ID" value="CAA04069.1"/>
    <property type="molecule type" value="Genomic_DNA"/>
</dbReference>
<dbReference type="SMR" id="O79464"/>
<dbReference type="GO" id="GO:0005743">
    <property type="term" value="C:mitochondrial inner membrane"/>
    <property type="evidence" value="ECO:0007669"/>
    <property type="project" value="UniProtKB-SubCell"/>
</dbReference>
<dbReference type="GO" id="GO:0045275">
    <property type="term" value="C:respiratory chain complex III"/>
    <property type="evidence" value="ECO:0007669"/>
    <property type="project" value="InterPro"/>
</dbReference>
<dbReference type="GO" id="GO:0046872">
    <property type="term" value="F:metal ion binding"/>
    <property type="evidence" value="ECO:0007669"/>
    <property type="project" value="UniProtKB-KW"/>
</dbReference>
<dbReference type="GO" id="GO:0008121">
    <property type="term" value="F:ubiquinol-cytochrome-c reductase activity"/>
    <property type="evidence" value="ECO:0007669"/>
    <property type="project" value="InterPro"/>
</dbReference>
<dbReference type="GO" id="GO:0006122">
    <property type="term" value="P:mitochondrial electron transport, ubiquinol to cytochrome c"/>
    <property type="evidence" value="ECO:0007669"/>
    <property type="project" value="TreeGrafter"/>
</dbReference>
<dbReference type="CDD" id="cd00290">
    <property type="entry name" value="cytochrome_b_C"/>
    <property type="match status" value="1"/>
</dbReference>
<dbReference type="CDD" id="cd00284">
    <property type="entry name" value="Cytochrome_b_N"/>
    <property type="match status" value="1"/>
</dbReference>
<dbReference type="FunFam" id="1.20.810.10:FF:000002">
    <property type="entry name" value="Cytochrome b"/>
    <property type="match status" value="1"/>
</dbReference>
<dbReference type="Gene3D" id="1.20.810.10">
    <property type="entry name" value="Cytochrome Bc1 Complex, Chain C"/>
    <property type="match status" value="1"/>
</dbReference>
<dbReference type="InterPro" id="IPR005798">
    <property type="entry name" value="Cyt_b/b6_C"/>
</dbReference>
<dbReference type="InterPro" id="IPR036150">
    <property type="entry name" value="Cyt_b/b6_C_sf"/>
</dbReference>
<dbReference type="InterPro" id="IPR005797">
    <property type="entry name" value="Cyt_b/b6_N"/>
</dbReference>
<dbReference type="InterPro" id="IPR027387">
    <property type="entry name" value="Cytb/b6-like_sf"/>
</dbReference>
<dbReference type="InterPro" id="IPR030689">
    <property type="entry name" value="Cytochrome_b"/>
</dbReference>
<dbReference type="InterPro" id="IPR048260">
    <property type="entry name" value="Cytochrome_b_C_euk/bac"/>
</dbReference>
<dbReference type="InterPro" id="IPR048259">
    <property type="entry name" value="Cytochrome_b_N_euk/bac"/>
</dbReference>
<dbReference type="InterPro" id="IPR016174">
    <property type="entry name" value="Di-haem_cyt_TM"/>
</dbReference>
<dbReference type="PANTHER" id="PTHR19271">
    <property type="entry name" value="CYTOCHROME B"/>
    <property type="match status" value="1"/>
</dbReference>
<dbReference type="PANTHER" id="PTHR19271:SF16">
    <property type="entry name" value="CYTOCHROME B"/>
    <property type="match status" value="1"/>
</dbReference>
<dbReference type="Pfam" id="PF00032">
    <property type="entry name" value="Cytochrom_B_C"/>
    <property type="match status" value="1"/>
</dbReference>
<dbReference type="Pfam" id="PF00033">
    <property type="entry name" value="Cytochrome_B"/>
    <property type="match status" value="1"/>
</dbReference>
<dbReference type="PIRSF" id="PIRSF038885">
    <property type="entry name" value="COB"/>
    <property type="match status" value="1"/>
</dbReference>
<dbReference type="SUPFAM" id="SSF81648">
    <property type="entry name" value="a domain/subunit of cytochrome bc1 complex (Ubiquinol-cytochrome c reductase)"/>
    <property type="match status" value="1"/>
</dbReference>
<dbReference type="SUPFAM" id="SSF81342">
    <property type="entry name" value="Transmembrane di-heme cytochromes"/>
    <property type="match status" value="1"/>
</dbReference>
<dbReference type="PROSITE" id="PS51003">
    <property type="entry name" value="CYTB_CTER"/>
    <property type="match status" value="1"/>
</dbReference>
<dbReference type="PROSITE" id="PS51002">
    <property type="entry name" value="CYTB_NTER"/>
    <property type="match status" value="1"/>
</dbReference>
<reference key="1">
    <citation type="journal article" date="1997" name="Zool. Sci.">
        <title>Molecular phylogeny from nucleotide sequences of the mitochondrial cytochrome b gene and evolutionary history of Eurasian soricine shrews (Mammalia, Insectivora).</title>
        <authorList>
            <person name="Ohdachi S."/>
            <person name="Masuda R."/>
            <person name="Abe H."/>
            <person name="Adachi J."/>
            <person name="Dokuchaev N.E."/>
            <person name="Haukisalmi V."/>
            <person name="Yoshida M.C."/>
        </authorList>
    </citation>
    <scope>NUCLEOTIDE SEQUENCE [GENOMIC DNA] OF 1-134</scope>
    <source>
        <strain>Isolate #2962</strain>
        <tissue>Hindfoot</tissue>
    </source>
</reference>
<reference key="2">
    <citation type="journal article" date="1999" name="Mol. Phylogenet. Evol.">
        <title>Molecular phylogeny and evolution of Sorex shrews (Soricidae: Insectivora) inferred from mitochondrial DNA sequence data.</title>
        <authorList>
            <person name="Fumagalli L."/>
            <person name="Taberlet P."/>
            <person name="Stewart D.T."/>
            <person name="Gielly L."/>
            <person name="Hausser J."/>
            <person name="Vogel P."/>
        </authorList>
    </citation>
    <scope>NUCLEOTIDE SEQUENCE [GENOMIC DNA] OF 44-379</scope>
</reference>
<feature type="chain" id="PRO_0000061584" description="Cytochrome b">
    <location>
        <begin position="1"/>
        <end position="379"/>
    </location>
</feature>
<feature type="transmembrane region" description="Helical" evidence="2">
    <location>
        <begin position="33"/>
        <end position="53"/>
    </location>
</feature>
<feature type="transmembrane region" description="Helical" evidence="2">
    <location>
        <begin position="77"/>
        <end position="98"/>
    </location>
</feature>
<feature type="transmembrane region" description="Helical" evidence="2">
    <location>
        <begin position="113"/>
        <end position="133"/>
    </location>
</feature>
<feature type="transmembrane region" description="Helical" evidence="2">
    <location>
        <begin position="178"/>
        <end position="198"/>
    </location>
</feature>
<feature type="transmembrane region" description="Helical" evidence="2">
    <location>
        <begin position="226"/>
        <end position="246"/>
    </location>
</feature>
<feature type="transmembrane region" description="Helical" evidence="2">
    <location>
        <begin position="288"/>
        <end position="308"/>
    </location>
</feature>
<feature type="transmembrane region" description="Helical" evidence="2">
    <location>
        <begin position="320"/>
        <end position="340"/>
    </location>
</feature>
<feature type="transmembrane region" description="Helical" evidence="2">
    <location>
        <begin position="347"/>
        <end position="367"/>
    </location>
</feature>
<feature type="binding site" description="axial binding residue" evidence="2">
    <location>
        <position position="83"/>
    </location>
    <ligand>
        <name>heme b</name>
        <dbReference type="ChEBI" id="CHEBI:60344"/>
        <label>b562</label>
    </ligand>
    <ligandPart>
        <name>Fe</name>
        <dbReference type="ChEBI" id="CHEBI:18248"/>
    </ligandPart>
</feature>
<feature type="binding site" description="axial binding residue" evidence="2">
    <location>
        <position position="97"/>
    </location>
    <ligand>
        <name>heme b</name>
        <dbReference type="ChEBI" id="CHEBI:60344"/>
        <label>b566</label>
    </ligand>
    <ligandPart>
        <name>Fe</name>
        <dbReference type="ChEBI" id="CHEBI:18248"/>
    </ligandPart>
</feature>
<feature type="binding site" description="axial binding residue" evidence="2">
    <location>
        <position position="182"/>
    </location>
    <ligand>
        <name>heme b</name>
        <dbReference type="ChEBI" id="CHEBI:60344"/>
        <label>b562</label>
    </ligand>
    <ligandPart>
        <name>Fe</name>
        <dbReference type="ChEBI" id="CHEBI:18248"/>
    </ligandPart>
</feature>
<feature type="binding site" description="axial binding residue" evidence="2">
    <location>
        <position position="196"/>
    </location>
    <ligand>
        <name>heme b</name>
        <dbReference type="ChEBI" id="CHEBI:60344"/>
        <label>b566</label>
    </ligand>
    <ligandPart>
        <name>Fe</name>
        <dbReference type="ChEBI" id="CHEBI:18248"/>
    </ligandPart>
</feature>
<feature type="binding site" evidence="2">
    <location>
        <position position="201"/>
    </location>
    <ligand>
        <name>a ubiquinone</name>
        <dbReference type="ChEBI" id="CHEBI:16389"/>
    </ligand>
</feature>
<comment type="function">
    <text evidence="2">Component of the ubiquinol-cytochrome c reductase complex (complex III or cytochrome b-c1 complex) that is part of the mitochondrial respiratory chain. The b-c1 complex mediates electron transfer from ubiquinol to cytochrome c. Contributes to the generation of a proton gradient across the mitochondrial membrane that is then used for ATP synthesis.</text>
</comment>
<comment type="cofactor">
    <cofactor evidence="2">
        <name>heme b</name>
        <dbReference type="ChEBI" id="CHEBI:60344"/>
    </cofactor>
    <text evidence="2">Binds 2 heme b groups non-covalently.</text>
</comment>
<comment type="subunit">
    <text evidence="2">The cytochrome bc1 complex contains 11 subunits: 3 respiratory subunits (MT-CYB, CYC1 and UQCRFS1), 2 core proteins (UQCRC1 and UQCRC2) and 6 low-molecular weight proteins (UQCRH/QCR6, UQCRB/QCR7, UQCRQ/QCR8, UQCR10/QCR9, UQCR11/QCR10 and a cleavage product of UQCRFS1). This cytochrome bc1 complex then forms a dimer.</text>
</comment>
<comment type="subcellular location">
    <subcellularLocation>
        <location evidence="2">Mitochondrion inner membrane</location>
        <topology evidence="2">Multi-pass membrane protein</topology>
    </subcellularLocation>
</comment>
<comment type="miscellaneous">
    <text evidence="1">Heme 1 (or BL or b562) is low-potential and absorbs at about 562 nm, and heme 2 (or BH or b566) is high-potential and absorbs at about 566 nm.</text>
</comment>
<comment type="similarity">
    <text evidence="3 4">Belongs to the cytochrome b family.</text>
</comment>
<comment type="caution">
    <text evidence="2">The full-length protein contains only eight transmembrane helices, not nine as predicted by bioinformatics tools.</text>
</comment>
<organism>
    <name type="scientific">Sorex tundrensis</name>
    <name type="common">Tundra shrew</name>
    <dbReference type="NCBI Taxonomy" id="62287"/>
    <lineage>
        <taxon>Eukaryota</taxon>
        <taxon>Metazoa</taxon>
        <taxon>Chordata</taxon>
        <taxon>Craniata</taxon>
        <taxon>Vertebrata</taxon>
        <taxon>Euteleostomi</taxon>
        <taxon>Mammalia</taxon>
        <taxon>Eutheria</taxon>
        <taxon>Laurasiatheria</taxon>
        <taxon>Eulipotyphla</taxon>
        <taxon>Soricidae</taxon>
        <taxon>Soricinae</taxon>
        <taxon>Sorex</taxon>
    </lineage>
</organism>
<accession>O79464</accession>
<accession>O21429</accession>
<geneLocation type="mitochondrion"/>